<reference key="1">
    <citation type="journal article" date="2002" name="J. Bacteriol.">
        <title>Whole-genome comparison of Mycobacterium tuberculosis clinical and laboratory strains.</title>
        <authorList>
            <person name="Fleischmann R.D."/>
            <person name="Alland D."/>
            <person name="Eisen J.A."/>
            <person name="Carpenter L."/>
            <person name="White O."/>
            <person name="Peterson J.D."/>
            <person name="DeBoy R.T."/>
            <person name="Dodson R.J."/>
            <person name="Gwinn M.L."/>
            <person name="Haft D.H."/>
            <person name="Hickey E.K."/>
            <person name="Kolonay J.F."/>
            <person name="Nelson W.C."/>
            <person name="Umayam L.A."/>
            <person name="Ermolaeva M.D."/>
            <person name="Salzberg S.L."/>
            <person name="Delcher A."/>
            <person name="Utterback T.R."/>
            <person name="Weidman J.F."/>
            <person name="Khouri H.M."/>
            <person name="Gill J."/>
            <person name="Mikula A."/>
            <person name="Bishai W."/>
            <person name="Jacobs W.R. Jr."/>
            <person name="Venter J.C."/>
            <person name="Fraser C.M."/>
        </authorList>
    </citation>
    <scope>NUCLEOTIDE SEQUENCE [LARGE SCALE GENOMIC DNA]</scope>
    <source>
        <strain>CDC 1551 / Oshkosh</strain>
    </source>
</reference>
<accession>P9WJH2</accession>
<accession>L0TBZ2</accession>
<accession>P65571</accession>
<accession>P95179</accession>
<protein>
    <recommendedName>
        <fullName evidence="1">NADH-quinone oxidoreductase subunit C</fullName>
        <ecNumber evidence="1">7.1.1.-</ecNumber>
    </recommendedName>
    <alternativeName>
        <fullName evidence="1">NADH dehydrogenase I subunit C</fullName>
    </alternativeName>
    <alternativeName>
        <fullName evidence="1">NDH-1 subunit C</fullName>
    </alternativeName>
</protein>
<sequence>MSPPNQDAQEGRPDSPTAEVVDVRRGMFGVSGTGDTSGYGRLVRQVVLPGSSPRPYGGYFDDIVDRLAEALRHERVEFEDAVEKVVVYRDELTLHVRRDLLPRVAQRLRDEPELRFELCLGVSGVHYPHETGRELHAVYPLQSITHNRRLRLEVSAPDSDPHIPSLFAIYPTNDWHERETYDFFGIIFDGHPALTRIEMPDDWQGHPQRKDYPLGGIPVEYKGAQIPPPDERRGYN</sequence>
<evidence type="ECO:0000255" key="1">
    <source>
        <dbReference type="HAMAP-Rule" id="MF_01357"/>
    </source>
</evidence>
<evidence type="ECO:0000256" key="2">
    <source>
        <dbReference type="SAM" id="MobiDB-lite"/>
    </source>
</evidence>
<evidence type="ECO:0000305" key="3"/>
<gene>
    <name evidence="1" type="primary">nuoC</name>
    <name type="ordered locus">MT3235</name>
</gene>
<name>NUOC_MYCTO</name>
<feature type="chain" id="PRO_0000427830" description="NADH-quinone oxidoreductase subunit C">
    <location>
        <begin position="1"/>
        <end position="236"/>
    </location>
</feature>
<feature type="region of interest" description="Disordered" evidence="2">
    <location>
        <begin position="1"/>
        <end position="20"/>
    </location>
</feature>
<proteinExistence type="inferred from homology"/>
<keyword id="KW-1003">Cell membrane</keyword>
<keyword id="KW-0472">Membrane</keyword>
<keyword id="KW-0520">NAD</keyword>
<keyword id="KW-0874">Quinone</keyword>
<keyword id="KW-1185">Reference proteome</keyword>
<keyword id="KW-1278">Translocase</keyword>
<keyword id="KW-0813">Transport</keyword>
<dbReference type="EC" id="7.1.1.-" evidence="1"/>
<dbReference type="EMBL" id="AE000516">
    <property type="protein sequence ID" value="AAK47574.1"/>
    <property type="status" value="ALT_INIT"/>
    <property type="molecule type" value="Genomic_DNA"/>
</dbReference>
<dbReference type="PIR" id="D70647">
    <property type="entry name" value="D70647"/>
</dbReference>
<dbReference type="RefSeq" id="WP_003416425.1">
    <property type="nucleotide sequence ID" value="NZ_KK341227.1"/>
</dbReference>
<dbReference type="SMR" id="P9WJH2"/>
<dbReference type="KEGG" id="mtc:MT3235"/>
<dbReference type="PATRIC" id="fig|83331.31.peg.3483"/>
<dbReference type="HOGENOM" id="CLU_042628_4_0_11"/>
<dbReference type="Proteomes" id="UP000001020">
    <property type="component" value="Chromosome"/>
</dbReference>
<dbReference type="GO" id="GO:0005886">
    <property type="term" value="C:plasma membrane"/>
    <property type="evidence" value="ECO:0007669"/>
    <property type="project" value="UniProtKB-SubCell"/>
</dbReference>
<dbReference type="GO" id="GO:0008137">
    <property type="term" value="F:NADH dehydrogenase (ubiquinone) activity"/>
    <property type="evidence" value="ECO:0007669"/>
    <property type="project" value="InterPro"/>
</dbReference>
<dbReference type="GO" id="GO:0050136">
    <property type="term" value="F:NADH:ubiquinone reductase (non-electrogenic) activity"/>
    <property type="evidence" value="ECO:0007669"/>
    <property type="project" value="UniProtKB-UniRule"/>
</dbReference>
<dbReference type="GO" id="GO:0048038">
    <property type="term" value="F:quinone binding"/>
    <property type="evidence" value="ECO:0007669"/>
    <property type="project" value="UniProtKB-KW"/>
</dbReference>
<dbReference type="FunFam" id="3.30.460.80:FF:000006">
    <property type="entry name" value="NADH-quinone oxidoreductase subunit C"/>
    <property type="match status" value="1"/>
</dbReference>
<dbReference type="Gene3D" id="3.30.460.80">
    <property type="entry name" value="NADH:ubiquinone oxidoreductase, 30kDa subunit"/>
    <property type="match status" value="1"/>
</dbReference>
<dbReference type="HAMAP" id="MF_01357">
    <property type="entry name" value="NDH1_NuoC"/>
    <property type="match status" value="1"/>
</dbReference>
<dbReference type="InterPro" id="IPR010218">
    <property type="entry name" value="NADH_DH_suC"/>
</dbReference>
<dbReference type="InterPro" id="IPR037232">
    <property type="entry name" value="NADH_quin_OxRdtase_su_C/D-like"/>
</dbReference>
<dbReference type="InterPro" id="IPR001268">
    <property type="entry name" value="NADH_UbQ_OxRdtase_30kDa_su"/>
</dbReference>
<dbReference type="NCBIfam" id="TIGR01961">
    <property type="entry name" value="NuoC_fam"/>
    <property type="match status" value="1"/>
</dbReference>
<dbReference type="NCBIfam" id="NF005856">
    <property type="entry name" value="PRK07785.1"/>
    <property type="match status" value="1"/>
</dbReference>
<dbReference type="PANTHER" id="PTHR10884:SF14">
    <property type="entry name" value="NADH DEHYDROGENASE [UBIQUINONE] IRON-SULFUR PROTEIN 3, MITOCHONDRIAL"/>
    <property type="match status" value="1"/>
</dbReference>
<dbReference type="PANTHER" id="PTHR10884">
    <property type="entry name" value="NADH DEHYDROGENASE UBIQUINONE IRON-SULFUR PROTEIN 3"/>
    <property type="match status" value="1"/>
</dbReference>
<dbReference type="Pfam" id="PF00329">
    <property type="entry name" value="Complex1_30kDa"/>
    <property type="match status" value="1"/>
</dbReference>
<dbReference type="SUPFAM" id="SSF143243">
    <property type="entry name" value="Nqo5-like"/>
    <property type="match status" value="1"/>
</dbReference>
<comment type="function">
    <text evidence="1">NDH-1 shuttles electrons from NADH, via FMN and iron-sulfur (Fe-S) centers, to quinones in the respiratory chain. The immediate electron acceptor for the enzyme in this species is believed to be a menaquinone. Couples the redox reaction to proton translocation (for every two electrons transferred, four hydrogen ions are translocated across the cytoplasmic membrane), and thus conserves the redox energy in a proton gradient.</text>
</comment>
<comment type="catalytic activity">
    <reaction evidence="1">
        <text>a quinone + NADH + 5 H(+)(in) = a quinol + NAD(+) + 4 H(+)(out)</text>
        <dbReference type="Rhea" id="RHEA:57888"/>
        <dbReference type="ChEBI" id="CHEBI:15378"/>
        <dbReference type="ChEBI" id="CHEBI:24646"/>
        <dbReference type="ChEBI" id="CHEBI:57540"/>
        <dbReference type="ChEBI" id="CHEBI:57945"/>
        <dbReference type="ChEBI" id="CHEBI:132124"/>
    </reaction>
</comment>
<comment type="subunit">
    <text evidence="1">NDH-1 is composed of 14 different subunits. Subunits NuoB, C, D, E, F, and G constitute the peripheral sector of the complex.</text>
</comment>
<comment type="subcellular location">
    <subcellularLocation>
        <location evidence="1">Cell membrane</location>
        <topology evidence="1">Peripheral membrane protein</topology>
        <orientation evidence="1">Cytoplasmic side</orientation>
    </subcellularLocation>
</comment>
<comment type="similarity">
    <text evidence="1">Belongs to the complex I 30 kDa subunit family.</text>
</comment>
<comment type="sequence caution" evidence="3">
    <conflict type="erroneous initiation">
        <sequence resource="EMBL-CDS" id="AAK47574"/>
    </conflict>
</comment>
<organism>
    <name type="scientific">Mycobacterium tuberculosis (strain CDC 1551 / Oshkosh)</name>
    <dbReference type="NCBI Taxonomy" id="83331"/>
    <lineage>
        <taxon>Bacteria</taxon>
        <taxon>Bacillati</taxon>
        <taxon>Actinomycetota</taxon>
        <taxon>Actinomycetes</taxon>
        <taxon>Mycobacteriales</taxon>
        <taxon>Mycobacteriaceae</taxon>
        <taxon>Mycobacterium</taxon>
        <taxon>Mycobacterium tuberculosis complex</taxon>
    </lineage>
</organism>